<sequence length="410" mass="45106">MDKLLDRFLNYVSFDTQSKSGVRQVPSTDGQLKLARALQQELLELGFEQIVLSKQGCLTAALPSNVAWSVPAIGFISHMDTSPDFSGKNVNPQILENYRGGDIALGVGDEVLSPVMFPVLHQLLGHTLITTDGKTLLGADDKAGIAEIITALVRLKKSQLPHGDIRIAFTPDEEIGKGAQFFDVKAFNAQWAYTVDGGGVGELEYENFNAASVQVKIVGNNVHPGSAKGVMVNALTLASRYHQHVPESESPEQTEGYQGFYHLHSMKGSVERADLHYIVRDFDRNGFEQRKQTMLDIAEKVGAGLHPDCYIEVTITDTYYNMREQVEQHPHIIALAQQAMRDCSIEPNMKPIRGGTDGAHLSFQGLPCPNLFTGGYNYHGKHEFVTLEGMEKAVSVIMRIAELTALRAKP</sequence>
<accession>Q6D4E3</accession>
<comment type="function">
    <text evidence="1">Cleaves the N-terminal amino acid of tripeptides.</text>
</comment>
<comment type="catalytic activity">
    <reaction evidence="1">
        <text>Release of the N-terminal residue from a tripeptide.</text>
        <dbReference type="EC" id="3.4.11.4"/>
    </reaction>
</comment>
<comment type="cofactor">
    <cofactor evidence="1">
        <name>Zn(2+)</name>
        <dbReference type="ChEBI" id="CHEBI:29105"/>
    </cofactor>
    <text evidence="1">Binds 2 Zn(2+) ions per subunit.</text>
</comment>
<comment type="subcellular location">
    <subcellularLocation>
        <location evidence="1">Cytoplasm</location>
    </subcellularLocation>
</comment>
<comment type="similarity">
    <text evidence="1">Belongs to the peptidase M20B family.</text>
</comment>
<organism>
    <name type="scientific">Pectobacterium atrosepticum (strain SCRI 1043 / ATCC BAA-672)</name>
    <name type="common">Erwinia carotovora subsp. atroseptica</name>
    <dbReference type="NCBI Taxonomy" id="218491"/>
    <lineage>
        <taxon>Bacteria</taxon>
        <taxon>Pseudomonadati</taxon>
        <taxon>Pseudomonadota</taxon>
        <taxon>Gammaproteobacteria</taxon>
        <taxon>Enterobacterales</taxon>
        <taxon>Pectobacteriaceae</taxon>
        <taxon>Pectobacterium</taxon>
    </lineage>
</organism>
<keyword id="KW-0031">Aminopeptidase</keyword>
<keyword id="KW-0963">Cytoplasm</keyword>
<keyword id="KW-0378">Hydrolase</keyword>
<keyword id="KW-0479">Metal-binding</keyword>
<keyword id="KW-0482">Metalloprotease</keyword>
<keyword id="KW-0645">Protease</keyword>
<keyword id="KW-1185">Reference proteome</keyword>
<keyword id="KW-0862">Zinc</keyword>
<gene>
    <name evidence="1" type="primary">pepT</name>
    <name type="ordered locus">ECA2448</name>
</gene>
<evidence type="ECO:0000255" key="1">
    <source>
        <dbReference type="HAMAP-Rule" id="MF_00550"/>
    </source>
</evidence>
<feature type="chain" id="PRO_0000185291" description="Peptidase T">
    <location>
        <begin position="1"/>
        <end position="410"/>
    </location>
</feature>
<feature type="active site" evidence="1">
    <location>
        <position position="80"/>
    </location>
</feature>
<feature type="active site" description="Proton acceptor" evidence="1">
    <location>
        <position position="173"/>
    </location>
</feature>
<feature type="binding site" evidence="1">
    <location>
        <position position="78"/>
    </location>
    <ligand>
        <name>Zn(2+)</name>
        <dbReference type="ChEBI" id="CHEBI:29105"/>
        <label>1</label>
    </ligand>
</feature>
<feature type="binding site" evidence="1">
    <location>
        <position position="140"/>
    </location>
    <ligand>
        <name>Zn(2+)</name>
        <dbReference type="ChEBI" id="CHEBI:29105"/>
        <label>1</label>
    </ligand>
</feature>
<feature type="binding site" evidence="1">
    <location>
        <position position="140"/>
    </location>
    <ligand>
        <name>Zn(2+)</name>
        <dbReference type="ChEBI" id="CHEBI:29105"/>
        <label>2</label>
    </ligand>
</feature>
<feature type="binding site" evidence="1">
    <location>
        <position position="174"/>
    </location>
    <ligand>
        <name>Zn(2+)</name>
        <dbReference type="ChEBI" id="CHEBI:29105"/>
        <label>2</label>
    </ligand>
</feature>
<feature type="binding site" evidence="1">
    <location>
        <position position="196"/>
    </location>
    <ligand>
        <name>Zn(2+)</name>
        <dbReference type="ChEBI" id="CHEBI:29105"/>
        <label>1</label>
    </ligand>
</feature>
<feature type="binding site" evidence="1">
    <location>
        <position position="379"/>
    </location>
    <ligand>
        <name>Zn(2+)</name>
        <dbReference type="ChEBI" id="CHEBI:29105"/>
        <label>2</label>
    </ligand>
</feature>
<proteinExistence type="inferred from homology"/>
<reference key="1">
    <citation type="journal article" date="2004" name="Proc. Natl. Acad. Sci. U.S.A.">
        <title>Genome sequence of the enterobacterial phytopathogen Erwinia carotovora subsp. atroseptica and characterization of virulence factors.</title>
        <authorList>
            <person name="Bell K.S."/>
            <person name="Sebaihia M."/>
            <person name="Pritchard L."/>
            <person name="Holden M.T.G."/>
            <person name="Hyman L.J."/>
            <person name="Holeva M.C."/>
            <person name="Thomson N.R."/>
            <person name="Bentley S.D."/>
            <person name="Churcher L.J.C."/>
            <person name="Mungall K."/>
            <person name="Atkin R."/>
            <person name="Bason N."/>
            <person name="Brooks K."/>
            <person name="Chillingworth T."/>
            <person name="Clark K."/>
            <person name="Doggett J."/>
            <person name="Fraser A."/>
            <person name="Hance Z."/>
            <person name="Hauser H."/>
            <person name="Jagels K."/>
            <person name="Moule S."/>
            <person name="Norbertczak H."/>
            <person name="Ormond D."/>
            <person name="Price C."/>
            <person name="Quail M.A."/>
            <person name="Sanders M."/>
            <person name="Walker D."/>
            <person name="Whitehead S."/>
            <person name="Salmond G.P.C."/>
            <person name="Birch P.R.J."/>
            <person name="Parkhill J."/>
            <person name="Toth I.K."/>
        </authorList>
    </citation>
    <scope>NUCLEOTIDE SEQUENCE [LARGE SCALE GENOMIC DNA]</scope>
    <source>
        <strain>SCRI 1043 / ATCC BAA-672</strain>
    </source>
</reference>
<protein>
    <recommendedName>
        <fullName evidence="1">Peptidase T</fullName>
        <ecNumber evidence="1">3.4.11.4</ecNumber>
    </recommendedName>
    <alternativeName>
        <fullName evidence="1">Aminotripeptidase</fullName>
        <shortName evidence="1">Tripeptidase</shortName>
    </alternativeName>
    <alternativeName>
        <fullName evidence="1">Tripeptide aminopeptidase</fullName>
    </alternativeName>
</protein>
<dbReference type="EC" id="3.4.11.4" evidence="1"/>
<dbReference type="EMBL" id="BX950851">
    <property type="protein sequence ID" value="CAG75350.1"/>
    <property type="molecule type" value="Genomic_DNA"/>
</dbReference>
<dbReference type="RefSeq" id="WP_011093999.1">
    <property type="nucleotide sequence ID" value="NC_004547.2"/>
</dbReference>
<dbReference type="SMR" id="Q6D4E3"/>
<dbReference type="STRING" id="218491.ECA2448"/>
<dbReference type="MEROPS" id="M20.003"/>
<dbReference type="KEGG" id="eca:ECA2448"/>
<dbReference type="PATRIC" id="fig|218491.5.peg.2479"/>
<dbReference type="eggNOG" id="COG2195">
    <property type="taxonomic scope" value="Bacteria"/>
</dbReference>
<dbReference type="HOGENOM" id="CLU_053676_0_0_6"/>
<dbReference type="OrthoDB" id="9804934at2"/>
<dbReference type="Proteomes" id="UP000007966">
    <property type="component" value="Chromosome"/>
</dbReference>
<dbReference type="GO" id="GO:0005829">
    <property type="term" value="C:cytosol"/>
    <property type="evidence" value="ECO:0007669"/>
    <property type="project" value="TreeGrafter"/>
</dbReference>
<dbReference type="GO" id="GO:0008237">
    <property type="term" value="F:metallopeptidase activity"/>
    <property type="evidence" value="ECO:0007669"/>
    <property type="project" value="UniProtKB-KW"/>
</dbReference>
<dbReference type="GO" id="GO:0045148">
    <property type="term" value="F:tripeptide aminopeptidase activity"/>
    <property type="evidence" value="ECO:0007669"/>
    <property type="project" value="UniProtKB-UniRule"/>
</dbReference>
<dbReference type="GO" id="GO:0008270">
    <property type="term" value="F:zinc ion binding"/>
    <property type="evidence" value="ECO:0007669"/>
    <property type="project" value="UniProtKB-UniRule"/>
</dbReference>
<dbReference type="GO" id="GO:0043171">
    <property type="term" value="P:peptide catabolic process"/>
    <property type="evidence" value="ECO:0007669"/>
    <property type="project" value="UniProtKB-UniRule"/>
</dbReference>
<dbReference type="GO" id="GO:0006508">
    <property type="term" value="P:proteolysis"/>
    <property type="evidence" value="ECO:0007669"/>
    <property type="project" value="UniProtKB-UniRule"/>
</dbReference>
<dbReference type="CDD" id="cd03892">
    <property type="entry name" value="M20_peptT"/>
    <property type="match status" value="1"/>
</dbReference>
<dbReference type="FunFam" id="3.30.70.360:FF:000002">
    <property type="entry name" value="Peptidase T"/>
    <property type="match status" value="1"/>
</dbReference>
<dbReference type="Gene3D" id="3.30.70.360">
    <property type="match status" value="1"/>
</dbReference>
<dbReference type="Gene3D" id="3.40.630.10">
    <property type="entry name" value="Zn peptidases"/>
    <property type="match status" value="1"/>
</dbReference>
<dbReference type="HAMAP" id="MF_00550">
    <property type="entry name" value="Aminopeptidase_M20"/>
    <property type="match status" value="1"/>
</dbReference>
<dbReference type="InterPro" id="IPR001261">
    <property type="entry name" value="ArgE/DapE_CS"/>
</dbReference>
<dbReference type="InterPro" id="IPR036264">
    <property type="entry name" value="Bact_exopeptidase_dim_dom"/>
</dbReference>
<dbReference type="InterPro" id="IPR002933">
    <property type="entry name" value="Peptidase_M20"/>
</dbReference>
<dbReference type="InterPro" id="IPR011650">
    <property type="entry name" value="Peptidase_M20_dimer"/>
</dbReference>
<dbReference type="InterPro" id="IPR010161">
    <property type="entry name" value="Peptidase_M20B"/>
</dbReference>
<dbReference type="NCBIfam" id="TIGR01882">
    <property type="entry name" value="peptidase-T"/>
    <property type="match status" value="1"/>
</dbReference>
<dbReference type="NCBIfam" id="NF003976">
    <property type="entry name" value="PRK05469.1"/>
    <property type="match status" value="1"/>
</dbReference>
<dbReference type="NCBIfam" id="NF009920">
    <property type="entry name" value="PRK13381.1"/>
    <property type="match status" value="1"/>
</dbReference>
<dbReference type="PANTHER" id="PTHR42994">
    <property type="entry name" value="PEPTIDASE T"/>
    <property type="match status" value="1"/>
</dbReference>
<dbReference type="PANTHER" id="PTHR42994:SF1">
    <property type="entry name" value="PEPTIDASE T"/>
    <property type="match status" value="1"/>
</dbReference>
<dbReference type="Pfam" id="PF07687">
    <property type="entry name" value="M20_dimer"/>
    <property type="match status" value="1"/>
</dbReference>
<dbReference type="Pfam" id="PF01546">
    <property type="entry name" value="Peptidase_M20"/>
    <property type="match status" value="1"/>
</dbReference>
<dbReference type="PIRSF" id="PIRSF037215">
    <property type="entry name" value="Peptidase_M20B"/>
    <property type="match status" value="1"/>
</dbReference>
<dbReference type="SUPFAM" id="SSF55031">
    <property type="entry name" value="Bacterial exopeptidase dimerisation domain"/>
    <property type="match status" value="1"/>
</dbReference>
<dbReference type="SUPFAM" id="SSF53187">
    <property type="entry name" value="Zn-dependent exopeptidases"/>
    <property type="match status" value="1"/>
</dbReference>
<dbReference type="PROSITE" id="PS00758">
    <property type="entry name" value="ARGE_DAPE_CPG2_1"/>
    <property type="match status" value="1"/>
</dbReference>
<dbReference type="PROSITE" id="PS00759">
    <property type="entry name" value="ARGE_DAPE_CPG2_2"/>
    <property type="match status" value="1"/>
</dbReference>
<name>PEPT_PECAS</name>